<sequence length="339" mass="38519">MQMNSLNDPKHLVKAVVRGEIKCLDVRAQSKYEISHLRKSVNIPSEKISKCWYQLPAKQEELFVVEDQGDKIETEETGTCAQQLKKRGWNIAGHFMFSHKIWEDLSLPQNELLESGPNRNLLFEPCPYLKEVMPVVEKGIKTNNARVLDIGCGSGRDLAWICFRESGKHWMVSALDAEKRAIQRFSELFSGLGLEDRIEGKKVAKVDASGLWKLYTRDGKQEPNATAISLADMLADFQNVPEGDVYKYDLVLQIRFLNRALLRQSSSLLRNNGFLFLCTFVNDGVHQYEHPRGSDHRFEKGEAAAIVSESDGRIRVLKDEIGFIEDGRPVQILLAQKVE</sequence>
<feature type="chain" id="PRO_0000116711" description="Uncharacterized protein UNK4.09">
    <location>
        <begin position="1"/>
        <end position="339"/>
    </location>
</feature>
<feature type="domain" description="Rhodanese" evidence="1">
    <location>
        <begin position="17"/>
        <end position="111"/>
    </location>
</feature>
<reference key="1">
    <citation type="journal article" date="2002" name="Nature">
        <title>The genome sequence of Schizosaccharomyces pombe.</title>
        <authorList>
            <person name="Wood V."/>
            <person name="Gwilliam R."/>
            <person name="Rajandream M.A."/>
            <person name="Lyne M.H."/>
            <person name="Lyne R."/>
            <person name="Stewart A."/>
            <person name="Sgouros J.G."/>
            <person name="Peat N."/>
            <person name="Hayles J."/>
            <person name="Baker S.G."/>
            <person name="Basham D."/>
            <person name="Bowman S."/>
            <person name="Brooks K."/>
            <person name="Brown D."/>
            <person name="Brown S."/>
            <person name="Chillingworth T."/>
            <person name="Churcher C.M."/>
            <person name="Collins M."/>
            <person name="Connor R."/>
            <person name="Cronin A."/>
            <person name="Davis P."/>
            <person name="Feltwell T."/>
            <person name="Fraser A."/>
            <person name="Gentles S."/>
            <person name="Goble A."/>
            <person name="Hamlin N."/>
            <person name="Harris D.E."/>
            <person name="Hidalgo J."/>
            <person name="Hodgson G."/>
            <person name="Holroyd S."/>
            <person name="Hornsby T."/>
            <person name="Howarth S."/>
            <person name="Huckle E.J."/>
            <person name="Hunt S."/>
            <person name="Jagels K."/>
            <person name="James K.D."/>
            <person name="Jones L."/>
            <person name="Jones M."/>
            <person name="Leather S."/>
            <person name="McDonald S."/>
            <person name="McLean J."/>
            <person name="Mooney P."/>
            <person name="Moule S."/>
            <person name="Mungall K.L."/>
            <person name="Murphy L.D."/>
            <person name="Niblett D."/>
            <person name="Odell C."/>
            <person name="Oliver K."/>
            <person name="O'Neil S."/>
            <person name="Pearson D."/>
            <person name="Quail M.A."/>
            <person name="Rabbinowitsch E."/>
            <person name="Rutherford K.M."/>
            <person name="Rutter S."/>
            <person name="Saunders D."/>
            <person name="Seeger K."/>
            <person name="Sharp S."/>
            <person name="Skelton J."/>
            <person name="Simmonds M.N."/>
            <person name="Squares R."/>
            <person name="Squares S."/>
            <person name="Stevens K."/>
            <person name="Taylor K."/>
            <person name="Taylor R.G."/>
            <person name="Tivey A."/>
            <person name="Walsh S.V."/>
            <person name="Warren T."/>
            <person name="Whitehead S."/>
            <person name="Woodward J.R."/>
            <person name="Volckaert G."/>
            <person name="Aert R."/>
            <person name="Robben J."/>
            <person name="Grymonprez B."/>
            <person name="Weltjens I."/>
            <person name="Vanstreels E."/>
            <person name="Rieger M."/>
            <person name="Schaefer M."/>
            <person name="Mueller-Auer S."/>
            <person name="Gabel C."/>
            <person name="Fuchs M."/>
            <person name="Duesterhoeft A."/>
            <person name="Fritzc C."/>
            <person name="Holzer E."/>
            <person name="Moestl D."/>
            <person name="Hilbert H."/>
            <person name="Borzym K."/>
            <person name="Langer I."/>
            <person name="Beck A."/>
            <person name="Lehrach H."/>
            <person name="Reinhardt R."/>
            <person name="Pohl T.M."/>
            <person name="Eger P."/>
            <person name="Zimmermann W."/>
            <person name="Wedler H."/>
            <person name="Wambutt R."/>
            <person name="Purnelle B."/>
            <person name="Goffeau A."/>
            <person name="Cadieu E."/>
            <person name="Dreano S."/>
            <person name="Gloux S."/>
            <person name="Lelaure V."/>
            <person name="Mottier S."/>
            <person name="Galibert F."/>
            <person name="Aves S.J."/>
            <person name="Xiang Z."/>
            <person name="Hunt C."/>
            <person name="Moore K."/>
            <person name="Hurst S.M."/>
            <person name="Lucas M."/>
            <person name="Rochet M."/>
            <person name="Gaillardin C."/>
            <person name="Tallada V.A."/>
            <person name="Garzon A."/>
            <person name="Thode G."/>
            <person name="Daga R.R."/>
            <person name="Cruzado L."/>
            <person name="Jimenez J."/>
            <person name="Sanchez M."/>
            <person name="del Rey F."/>
            <person name="Benito J."/>
            <person name="Dominguez A."/>
            <person name="Revuelta J.L."/>
            <person name="Moreno S."/>
            <person name="Armstrong J."/>
            <person name="Forsburg S.L."/>
            <person name="Cerutti L."/>
            <person name="Lowe T."/>
            <person name="McCombie W.R."/>
            <person name="Paulsen I."/>
            <person name="Potashkin J."/>
            <person name="Shpakovski G.V."/>
            <person name="Ussery D."/>
            <person name="Barrell B.G."/>
            <person name="Nurse P."/>
        </authorList>
    </citation>
    <scope>NUCLEOTIDE SEQUENCE [LARGE SCALE GENOMIC DNA]</scope>
    <source>
        <strain>972 / ATCC 24843</strain>
    </source>
</reference>
<protein>
    <recommendedName>
        <fullName>Uncharacterized protein UNK4.09</fullName>
    </recommendedName>
</protein>
<name>YEA9_SCHPO</name>
<gene>
    <name type="ORF">SPAC2E11.09</name>
    <name type="ORF">SPACUNK4.09</name>
</gene>
<evidence type="ECO:0000255" key="1">
    <source>
        <dbReference type="PROSITE-ProRule" id="PRU00173"/>
    </source>
</evidence>
<accession>O14074</accession>
<dbReference type="EMBL" id="CU329670">
    <property type="protein sequence ID" value="CAA20139.1"/>
    <property type="molecule type" value="Genomic_DNA"/>
</dbReference>
<dbReference type="PIR" id="T41704">
    <property type="entry name" value="T41704"/>
</dbReference>
<dbReference type="RefSeq" id="NP_593969.1">
    <property type="nucleotide sequence ID" value="NM_001019396.2"/>
</dbReference>
<dbReference type="BioGRID" id="279004">
    <property type="interactions" value="9"/>
</dbReference>
<dbReference type="FunCoup" id="O14074">
    <property type="interactions" value="201"/>
</dbReference>
<dbReference type="PaxDb" id="4896-SPACUNK4.09.1"/>
<dbReference type="EnsemblFungi" id="SPACUNK4.09.1">
    <property type="protein sequence ID" value="SPACUNK4.09.1:pep"/>
    <property type="gene ID" value="SPACUNK4.09"/>
</dbReference>
<dbReference type="KEGG" id="spo:2542547"/>
<dbReference type="PomBase" id="SPACUNK4.09"/>
<dbReference type="VEuPathDB" id="FungiDB:SPACUNK4.09"/>
<dbReference type="eggNOG" id="ENOG502S7WX">
    <property type="taxonomic scope" value="Eukaryota"/>
</dbReference>
<dbReference type="HOGENOM" id="CLU_059838_0_0_1"/>
<dbReference type="InParanoid" id="O14074"/>
<dbReference type="OMA" id="WFQLPAK"/>
<dbReference type="PRO" id="PR:O14074"/>
<dbReference type="Proteomes" id="UP000002485">
    <property type="component" value="Chromosome I"/>
</dbReference>
<dbReference type="GO" id="GO:0005829">
    <property type="term" value="C:cytosol"/>
    <property type="evidence" value="ECO:0007005"/>
    <property type="project" value="PomBase"/>
</dbReference>
<dbReference type="GO" id="GO:0005634">
    <property type="term" value="C:nucleus"/>
    <property type="evidence" value="ECO:0007005"/>
    <property type="project" value="PomBase"/>
</dbReference>
<dbReference type="GO" id="GO:0008168">
    <property type="term" value="F:methyltransferase activity"/>
    <property type="evidence" value="ECO:0000318"/>
    <property type="project" value="GO_Central"/>
</dbReference>
<dbReference type="CDD" id="cd02440">
    <property type="entry name" value="AdoMet_MTases"/>
    <property type="match status" value="1"/>
</dbReference>
<dbReference type="Gene3D" id="3.40.250.10">
    <property type="entry name" value="Rhodanese-like domain"/>
    <property type="match status" value="1"/>
</dbReference>
<dbReference type="Gene3D" id="3.40.50.150">
    <property type="entry name" value="Vaccinia Virus protein VP39"/>
    <property type="match status" value="1"/>
</dbReference>
<dbReference type="InterPro" id="IPR001763">
    <property type="entry name" value="Rhodanese-like_dom"/>
</dbReference>
<dbReference type="InterPro" id="IPR036873">
    <property type="entry name" value="Rhodanese-like_dom_sf"/>
</dbReference>
<dbReference type="InterPro" id="IPR029063">
    <property type="entry name" value="SAM-dependent_MTases_sf"/>
</dbReference>
<dbReference type="Pfam" id="PF13489">
    <property type="entry name" value="Methyltransf_23"/>
    <property type="match status" value="1"/>
</dbReference>
<dbReference type="SUPFAM" id="SSF52821">
    <property type="entry name" value="Rhodanese/Cell cycle control phosphatase"/>
    <property type="match status" value="1"/>
</dbReference>
<dbReference type="SUPFAM" id="SSF53335">
    <property type="entry name" value="S-adenosyl-L-methionine-dependent methyltransferases"/>
    <property type="match status" value="1"/>
</dbReference>
<dbReference type="PROSITE" id="PS50206">
    <property type="entry name" value="RHODANESE_3"/>
    <property type="match status" value="1"/>
</dbReference>
<proteinExistence type="predicted"/>
<organism>
    <name type="scientific">Schizosaccharomyces pombe (strain 972 / ATCC 24843)</name>
    <name type="common">Fission yeast</name>
    <dbReference type="NCBI Taxonomy" id="284812"/>
    <lineage>
        <taxon>Eukaryota</taxon>
        <taxon>Fungi</taxon>
        <taxon>Dikarya</taxon>
        <taxon>Ascomycota</taxon>
        <taxon>Taphrinomycotina</taxon>
        <taxon>Schizosaccharomycetes</taxon>
        <taxon>Schizosaccharomycetales</taxon>
        <taxon>Schizosaccharomycetaceae</taxon>
        <taxon>Schizosaccharomyces</taxon>
    </lineage>
</organism>
<keyword id="KW-1185">Reference proteome</keyword>